<comment type="function">
    <text evidence="1">Myoinhibiting neuropeptide.</text>
</comment>
<comment type="subcellular location">
    <subcellularLocation>
        <location evidence="6">Secreted</location>
    </subcellularLocation>
</comment>
<comment type="similarity">
    <text evidence="2">Belongs to the myosuppressin family.</text>
</comment>
<name>NEMS_AUSRA</name>
<keyword id="KW-0027">Amidation</keyword>
<keyword id="KW-0903">Direct protein sequencing</keyword>
<keyword id="KW-0527">Neuropeptide</keyword>
<keyword id="KW-0873">Pyrrolidone carboxylic acid</keyword>
<keyword id="KW-0964">Secreted</keyword>
<protein>
    <recommendedName>
        <fullName evidence="4">Myosuppressin</fullName>
        <shortName evidence="4">MS</shortName>
    </recommendedName>
</protein>
<accession>B3A0B5</accession>
<dbReference type="GO" id="GO:0005576">
    <property type="term" value="C:extracellular region"/>
    <property type="evidence" value="ECO:0007669"/>
    <property type="project" value="UniProtKB-SubCell"/>
</dbReference>
<dbReference type="GO" id="GO:0007218">
    <property type="term" value="P:neuropeptide signaling pathway"/>
    <property type="evidence" value="ECO:0007669"/>
    <property type="project" value="UniProtKB-KW"/>
</dbReference>
<evidence type="ECO:0000250" key="1">
    <source>
        <dbReference type="UniProtKB" id="P61849"/>
    </source>
</evidence>
<evidence type="ECO:0000255" key="2"/>
<evidence type="ECO:0000269" key="3">
    <source>
    </source>
</evidence>
<evidence type="ECO:0000303" key="4">
    <source>
    </source>
</evidence>
<evidence type="ECO:0000305" key="5"/>
<evidence type="ECO:0000305" key="6">
    <source>
    </source>
</evidence>
<organism>
    <name type="scientific">Austrophasma rawsonvillense</name>
    <name type="common">Gladiator</name>
    <name type="synonym">Heel-walker</name>
    <dbReference type="NCBI Taxonomy" id="253137"/>
    <lineage>
        <taxon>Eukaryota</taxon>
        <taxon>Metazoa</taxon>
        <taxon>Ecdysozoa</taxon>
        <taxon>Arthropoda</taxon>
        <taxon>Hexapoda</taxon>
        <taxon>Insecta</taxon>
        <taxon>Pterygota</taxon>
        <taxon>Neoptera</taxon>
        <taxon>Polyneoptera</taxon>
        <taxon>Mantophasmatodea</taxon>
        <taxon>Austrophasmatidae</taxon>
        <taxon>Austrophasma</taxon>
    </lineage>
</organism>
<feature type="peptide" id="PRO_0000421711" description="Myosuppressin" evidence="3">
    <location>
        <begin position="1"/>
        <end position="10"/>
    </location>
</feature>
<feature type="modified residue" description="Pyrrolidone carboxylic acid" evidence="3">
    <location>
        <position position="1"/>
    </location>
</feature>
<feature type="modified residue" description="Phenylalanine amide" evidence="3">
    <location>
        <position position="10"/>
    </location>
</feature>
<sequence length="10" mass="1275">QDVDHVFLRF</sequence>
<reference evidence="5" key="1">
    <citation type="journal article" date="2012" name="Syst. Biol.">
        <title>Peptidomics-based phylogeny and biogeography of Mantophasmatodea (Hexapoda).</title>
        <authorList>
            <person name="Predel R."/>
            <person name="Neupert S."/>
            <person name="Huetteroth W."/>
            <person name="Kahnt J."/>
            <person name="Waidelich D."/>
            <person name="Roth S."/>
        </authorList>
    </citation>
    <scope>PROTEIN SEQUENCE</scope>
    <scope>PYROGLUTAMATE FORMATION AT GLN-1</scope>
    <scope>AMIDATION AT PHE-10</scope>
    <source>
        <tissue evidence="3">Corpora cardiaca</tissue>
    </source>
</reference>
<proteinExistence type="evidence at protein level"/>